<protein>
    <recommendedName>
        <fullName evidence="1">Polyribonucleotide nucleotidyltransferase</fullName>
        <ecNumber evidence="1">2.7.7.8</ecNumber>
    </recommendedName>
    <alternativeName>
        <fullName evidence="1">Polynucleotide phosphorylase</fullName>
        <shortName evidence="1">PNPase</shortName>
    </alternativeName>
</protein>
<proteinExistence type="inferred from homology"/>
<evidence type="ECO:0000255" key="1">
    <source>
        <dbReference type="HAMAP-Rule" id="MF_01595"/>
    </source>
</evidence>
<evidence type="ECO:0000256" key="2">
    <source>
        <dbReference type="SAM" id="MobiDB-lite"/>
    </source>
</evidence>
<evidence type="ECO:0000305" key="3"/>
<comment type="function">
    <text evidence="1">Involved in mRNA degradation. Catalyzes the phosphorolysis of single-stranded polyribonucleotides processively in the 3'- to 5'-direction.</text>
</comment>
<comment type="catalytic activity">
    <reaction evidence="1">
        <text>RNA(n+1) + phosphate = RNA(n) + a ribonucleoside 5'-diphosphate</text>
        <dbReference type="Rhea" id="RHEA:22096"/>
        <dbReference type="Rhea" id="RHEA-COMP:14527"/>
        <dbReference type="Rhea" id="RHEA-COMP:17342"/>
        <dbReference type="ChEBI" id="CHEBI:43474"/>
        <dbReference type="ChEBI" id="CHEBI:57930"/>
        <dbReference type="ChEBI" id="CHEBI:140395"/>
        <dbReference type="EC" id="2.7.7.8"/>
    </reaction>
</comment>
<comment type="cofactor">
    <cofactor evidence="1">
        <name>Mg(2+)</name>
        <dbReference type="ChEBI" id="CHEBI:18420"/>
    </cofactor>
</comment>
<comment type="subcellular location">
    <subcellularLocation>
        <location evidence="1">Cytoplasm</location>
    </subcellularLocation>
</comment>
<comment type="similarity">
    <text evidence="1">Belongs to the polyribonucleotide nucleotidyltransferase family.</text>
</comment>
<comment type="sequence caution" evidence="3">
    <conflict type="erroneous initiation">
        <sequence resource="EMBL-CDS" id="ABP93090"/>
    </conflict>
</comment>
<dbReference type="EC" id="2.7.7.8" evidence="1"/>
<dbReference type="EMBL" id="CP000408">
    <property type="protein sequence ID" value="ABP93090.1"/>
    <property type="status" value="ALT_INIT"/>
    <property type="molecule type" value="Genomic_DNA"/>
</dbReference>
<dbReference type="SMR" id="A4W401"/>
<dbReference type="KEGG" id="ssv:SSU98_1932"/>
<dbReference type="HOGENOM" id="CLU_004217_2_2_9"/>
<dbReference type="GO" id="GO:0005829">
    <property type="term" value="C:cytosol"/>
    <property type="evidence" value="ECO:0007669"/>
    <property type="project" value="TreeGrafter"/>
</dbReference>
<dbReference type="GO" id="GO:0000175">
    <property type="term" value="F:3'-5'-RNA exonuclease activity"/>
    <property type="evidence" value="ECO:0007669"/>
    <property type="project" value="TreeGrafter"/>
</dbReference>
<dbReference type="GO" id="GO:0000287">
    <property type="term" value="F:magnesium ion binding"/>
    <property type="evidence" value="ECO:0007669"/>
    <property type="project" value="UniProtKB-UniRule"/>
</dbReference>
<dbReference type="GO" id="GO:0004654">
    <property type="term" value="F:polyribonucleotide nucleotidyltransferase activity"/>
    <property type="evidence" value="ECO:0007669"/>
    <property type="project" value="UniProtKB-UniRule"/>
</dbReference>
<dbReference type="GO" id="GO:0003723">
    <property type="term" value="F:RNA binding"/>
    <property type="evidence" value="ECO:0007669"/>
    <property type="project" value="UniProtKB-UniRule"/>
</dbReference>
<dbReference type="GO" id="GO:0006402">
    <property type="term" value="P:mRNA catabolic process"/>
    <property type="evidence" value="ECO:0007669"/>
    <property type="project" value="UniProtKB-UniRule"/>
</dbReference>
<dbReference type="GO" id="GO:0006396">
    <property type="term" value="P:RNA processing"/>
    <property type="evidence" value="ECO:0007669"/>
    <property type="project" value="InterPro"/>
</dbReference>
<dbReference type="CDD" id="cd02393">
    <property type="entry name" value="KH-I_PNPase"/>
    <property type="match status" value="1"/>
</dbReference>
<dbReference type="CDD" id="cd11363">
    <property type="entry name" value="RNase_PH_PNPase_1"/>
    <property type="match status" value="1"/>
</dbReference>
<dbReference type="CDD" id="cd11364">
    <property type="entry name" value="RNase_PH_PNPase_2"/>
    <property type="match status" value="1"/>
</dbReference>
<dbReference type="FunFam" id="3.30.1370.10:FF:000001">
    <property type="entry name" value="Polyribonucleotide nucleotidyltransferase"/>
    <property type="match status" value="1"/>
</dbReference>
<dbReference type="FunFam" id="3.30.230.70:FF:000001">
    <property type="entry name" value="Polyribonucleotide nucleotidyltransferase"/>
    <property type="match status" value="1"/>
</dbReference>
<dbReference type="FunFam" id="3.30.230.70:FF:000002">
    <property type="entry name" value="Polyribonucleotide nucleotidyltransferase"/>
    <property type="match status" value="1"/>
</dbReference>
<dbReference type="Gene3D" id="3.30.230.70">
    <property type="entry name" value="GHMP Kinase, N-terminal domain"/>
    <property type="match status" value="2"/>
</dbReference>
<dbReference type="Gene3D" id="3.30.1370.10">
    <property type="entry name" value="K Homology domain, type 1"/>
    <property type="match status" value="1"/>
</dbReference>
<dbReference type="Gene3D" id="2.40.50.140">
    <property type="entry name" value="Nucleic acid-binding proteins"/>
    <property type="match status" value="1"/>
</dbReference>
<dbReference type="HAMAP" id="MF_01595">
    <property type="entry name" value="PNPase"/>
    <property type="match status" value="1"/>
</dbReference>
<dbReference type="InterPro" id="IPR001247">
    <property type="entry name" value="ExoRNase_PH_dom1"/>
</dbReference>
<dbReference type="InterPro" id="IPR015847">
    <property type="entry name" value="ExoRNase_PH_dom2"/>
</dbReference>
<dbReference type="InterPro" id="IPR036345">
    <property type="entry name" value="ExoRNase_PH_dom2_sf"/>
</dbReference>
<dbReference type="InterPro" id="IPR004087">
    <property type="entry name" value="KH_dom"/>
</dbReference>
<dbReference type="InterPro" id="IPR004088">
    <property type="entry name" value="KH_dom_type_1"/>
</dbReference>
<dbReference type="InterPro" id="IPR036612">
    <property type="entry name" value="KH_dom_type_1_sf"/>
</dbReference>
<dbReference type="InterPro" id="IPR012340">
    <property type="entry name" value="NA-bd_OB-fold"/>
</dbReference>
<dbReference type="InterPro" id="IPR012162">
    <property type="entry name" value="PNPase"/>
</dbReference>
<dbReference type="InterPro" id="IPR027408">
    <property type="entry name" value="PNPase/RNase_PH_dom_sf"/>
</dbReference>
<dbReference type="InterPro" id="IPR015848">
    <property type="entry name" value="PNPase_PH_RNA-bd_bac/org-type"/>
</dbReference>
<dbReference type="InterPro" id="IPR036456">
    <property type="entry name" value="PNPase_PH_RNA-bd_sf"/>
</dbReference>
<dbReference type="InterPro" id="IPR020568">
    <property type="entry name" value="Ribosomal_Su5_D2-typ_SF"/>
</dbReference>
<dbReference type="InterPro" id="IPR003029">
    <property type="entry name" value="S1_domain"/>
</dbReference>
<dbReference type="NCBIfam" id="TIGR03591">
    <property type="entry name" value="polynuc_phos"/>
    <property type="match status" value="1"/>
</dbReference>
<dbReference type="NCBIfam" id="NF008805">
    <property type="entry name" value="PRK11824.1"/>
    <property type="match status" value="1"/>
</dbReference>
<dbReference type="PANTHER" id="PTHR11252">
    <property type="entry name" value="POLYRIBONUCLEOTIDE NUCLEOTIDYLTRANSFERASE"/>
    <property type="match status" value="1"/>
</dbReference>
<dbReference type="PANTHER" id="PTHR11252:SF0">
    <property type="entry name" value="POLYRIBONUCLEOTIDE NUCLEOTIDYLTRANSFERASE 1, MITOCHONDRIAL"/>
    <property type="match status" value="1"/>
</dbReference>
<dbReference type="Pfam" id="PF00013">
    <property type="entry name" value="KH_1"/>
    <property type="match status" value="1"/>
</dbReference>
<dbReference type="Pfam" id="PF03726">
    <property type="entry name" value="PNPase"/>
    <property type="match status" value="1"/>
</dbReference>
<dbReference type="Pfam" id="PF01138">
    <property type="entry name" value="RNase_PH"/>
    <property type="match status" value="2"/>
</dbReference>
<dbReference type="Pfam" id="PF03725">
    <property type="entry name" value="RNase_PH_C"/>
    <property type="match status" value="2"/>
</dbReference>
<dbReference type="Pfam" id="PF00575">
    <property type="entry name" value="S1"/>
    <property type="match status" value="1"/>
</dbReference>
<dbReference type="PIRSF" id="PIRSF005499">
    <property type="entry name" value="PNPase"/>
    <property type="match status" value="1"/>
</dbReference>
<dbReference type="SMART" id="SM00322">
    <property type="entry name" value="KH"/>
    <property type="match status" value="1"/>
</dbReference>
<dbReference type="SMART" id="SM00316">
    <property type="entry name" value="S1"/>
    <property type="match status" value="1"/>
</dbReference>
<dbReference type="SUPFAM" id="SSF54791">
    <property type="entry name" value="Eukaryotic type KH-domain (KH-domain type I)"/>
    <property type="match status" value="1"/>
</dbReference>
<dbReference type="SUPFAM" id="SSF50249">
    <property type="entry name" value="Nucleic acid-binding proteins"/>
    <property type="match status" value="1"/>
</dbReference>
<dbReference type="SUPFAM" id="SSF46915">
    <property type="entry name" value="Polynucleotide phosphorylase/guanosine pentaphosphate synthase (PNPase/GPSI), domain 3"/>
    <property type="match status" value="1"/>
</dbReference>
<dbReference type="SUPFAM" id="SSF55666">
    <property type="entry name" value="Ribonuclease PH domain 2-like"/>
    <property type="match status" value="2"/>
</dbReference>
<dbReference type="SUPFAM" id="SSF54211">
    <property type="entry name" value="Ribosomal protein S5 domain 2-like"/>
    <property type="match status" value="2"/>
</dbReference>
<dbReference type="PROSITE" id="PS50084">
    <property type="entry name" value="KH_TYPE_1"/>
    <property type="match status" value="1"/>
</dbReference>
<dbReference type="PROSITE" id="PS50126">
    <property type="entry name" value="S1"/>
    <property type="match status" value="1"/>
</dbReference>
<accession>A4W401</accession>
<gene>
    <name evidence="1" type="primary">pnp</name>
    <name type="ordered locus">SSU98_1932</name>
</gene>
<feature type="chain" id="PRO_0000329883" description="Polyribonucleotide nucleotidyltransferase">
    <location>
        <begin position="1"/>
        <end position="739"/>
    </location>
</feature>
<feature type="domain" description="KH" evidence="1">
    <location>
        <begin position="556"/>
        <end position="615"/>
    </location>
</feature>
<feature type="domain" description="S1 motif" evidence="1">
    <location>
        <begin position="625"/>
        <end position="693"/>
    </location>
</feature>
<feature type="region of interest" description="Disordered" evidence="2">
    <location>
        <begin position="699"/>
        <end position="739"/>
    </location>
</feature>
<feature type="compositionally biased region" description="Basic and acidic residues" evidence="2">
    <location>
        <begin position="722"/>
        <end position="739"/>
    </location>
</feature>
<feature type="binding site" evidence="1">
    <location>
        <position position="489"/>
    </location>
    <ligand>
        <name>Mg(2+)</name>
        <dbReference type="ChEBI" id="CHEBI:18420"/>
    </ligand>
</feature>
<feature type="binding site" evidence="1">
    <location>
        <position position="495"/>
    </location>
    <ligand>
        <name>Mg(2+)</name>
        <dbReference type="ChEBI" id="CHEBI:18420"/>
    </ligand>
</feature>
<reference key="1">
    <citation type="journal article" date="2007" name="PLoS ONE">
        <title>A glimpse of streptococcal toxic shock syndrome from comparative genomics of S. suis 2 Chinese isolates.</title>
        <authorList>
            <person name="Chen C."/>
            <person name="Tang J."/>
            <person name="Dong W."/>
            <person name="Wang C."/>
            <person name="Feng Y."/>
            <person name="Wang J."/>
            <person name="Zheng F."/>
            <person name="Pan X."/>
            <person name="Liu D."/>
            <person name="Li M."/>
            <person name="Song Y."/>
            <person name="Zhu X."/>
            <person name="Sun H."/>
            <person name="Feng T."/>
            <person name="Guo Z."/>
            <person name="Ju A."/>
            <person name="Ge J."/>
            <person name="Dong Y."/>
            <person name="Sun W."/>
            <person name="Jiang Y."/>
            <person name="Wang J."/>
            <person name="Yan J."/>
            <person name="Yang H."/>
            <person name="Wang X."/>
            <person name="Gao G.F."/>
            <person name="Yang R."/>
            <person name="Wang J."/>
            <person name="Yu J."/>
        </authorList>
    </citation>
    <scope>NUCLEOTIDE SEQUENCE [LARGE SCALE GENOMIC DNA]</scope>
    <source>
        <strain>98HAH33</strain>
    </source>
</reference>
<keyword id="KW-0963">Cytoplasm</keyword>
<keyword id="KW-0460">Magnesium</keyword>
<keyword id="KW-0479">Metal-binding</keyword>
<keyword id="KW-0548">Nucleotidyltransferase</keyword>
<keyword id="KW-0694">RNA-binding</keyword>
<keyword id="KW-0808">Transferase</keyword>
<organism>
    <name type="scientific">Streptococcus suis (strain 98HAH33)</name>
    <dbReference type="NCBI Taxonomy" id="391296"/>
    <lineage>
        <taxon>Bacteria</taxon>
        <taxon>Bacillati</taxon>
        <taxon>Bacillota</taxon>
        <taxon>Bacilli</taxon>
        <taxon>Lactobacillales</taxon>
        <taxon>Streptococcaceae</taxon>
        <taxon>Streptococcus</taxon>
    </lineage>
</organism>
<name>PNP_STRS2</name>
<sequence>MSKQVFETVFAGKKLVVETGQVAKQANGAVVVRYGDSTVLTAAVMSKKMATGDFFPLQVNYEEKMYAAGKFPGGWMKREGRPSTDATLTARLIDRPIRPMFAEGFRNEVQVINTVLSYDPDASAPMAAMFGSSLALAISDIPFNGPIAGVQVGYVNGELIINPDQAQQEASLLELTVAGNKDAINMVESGAKELSEEVMLEALLKGHAAIQELLDFQNQIVAAVGKEKADVELLQVDPELQAEIVAAYNDDLKKAVQVEEKLAREDATNAVRETVIATYEEKYAEHEEFDRIMRDVHEILELMEHTEVRRLITEDKVRPDGRRVDEIRPLDAEVDFLPNVHGSGLFTRGQTQALSVLTLAPMGETQIIDGLDDEYKKRFLHHYNFPQYSVGSTGRYGAPGRREIGHGALGERALEQVLPSLEDFPYAIRLVAEVLESNGSSSQASITAGTLALMAGGVPIKAPVAGIAMGLISDGTNYTVLTDIQGLEDHFGDMDFKVAGTRDGITALQMDIKIDGITPQILEEALAQAKKARFEILDVIEATIPEVRPDLAPTAPKIDTIKIDVDKIKIVIGKGGETIDKIIAETGVKIDIDEDGLVAIFSPDRAAIERTKEIIAGLVREAKVDEVFQAKVVRLEKFGAFVNLFDKTDALVHVSEMAWTRVNKPEDLVEVGDVVDVKVIKIDDKGRIDASMKALLPKPEGYVEPEKRERSEKPRRHKEHKEKKDNNFGEFKFHKVDKK</sequence>